<gene>
    <name evidence="4" type="ordered locus">Rv1703c</name>
</gene>
<dbReference type="EC" id="2.1.1.-" evidence="1"/>
<dbReference type="EMBL" id="AL123456">
    <property type="protein sequence ID" value="CCP44468.1"/>
    <property type="status" value="ALT_INIT"/>
    <property type="molecule type" value="Genomic_DNA"/>
</dbReference>
<dbReference type="SMR" id="L0TAD5"/>
<dbReference type="FunCoup" id="L0TAD5">
    <property type="interactions" value="107"/>
</dbReference>
<dbReference type="STRING" id="83332.Rv1703c"/>
<dbReference type="PaxDb" id="83332-Rv1703c"/>
<dbReference type="TubercuList" id="Rv1703c"/>
<dbReference type="eggNOG" id="COG4122">
    <property type="taxonomic scope" value="Bacteria"/>
</dbReference>
<dbReference type="InParanoid" id="L0TAD5"/>
<dbReference type="PhylomeDB" id="L0TAD5"/>
<dbReference type="Proteomes" id="UP000001584">
    <property type="component" value="Chromosome"/>
</dbReference>
<dbReference type="GO" id="GO:0046872">
    <property type="term" value="F:metal ion binding"/>
    <property type="evidence" value="ECO:0007669"/>
    <property type="project" value="UniProtKB-KW"/>
</dbReference>
<dbReference type="GO" id="GO:0008171">
    <property type="term" value="F:O-methyltransferase activity"/>
    <property type="evidence" value="ECO:0000318"/>
    <property type="project" value="GO_Central"/>
</dbReference>
<dbReference type="GO" id="GO:0032259">
    <property type="term" value="P:methylation"/>
    <property type="evidence" value="ECO:0007669"/>
    <property type="project" value="UniProtKB-KW"/>
</dbReference>
<dbReference type="CDD" id="cd02440">
    <property type="entry name" value="AdoMet_MTases"/>
    <property type="match status" value="1"/>
</dbReference>
<dbReference type="Gene3D" id="3.40.50.150">
    <property type="entry name" value="Vaccinia Virus protein VP39"/>
    <property type="match status" value="1"/>
</dbReference>
<dbReference type="InterPro" id="IPR029063">
    <property type="entry name" value="SAM-dependent_MTases_sf"/>
</dbReference>
<dbReference type="InterPro" id="IPR002935">
    <property type="entry name" value="SAM_O-MeTrfase"/>
</dbReference>
<dbReference type="PANTHER" id="PTHR43836">
    <property type="entry name" value="CATECHOL O-METHYLTRANSFERASE 1-RELATED"/>
    <property type="match status" value="1"/>
</dbReference>
<dbReference type="PANTHER" id="PTHR43836:SF2">
    <property type="entry name" value="CATECHOL O-METHYLTRANSFERASE 1-RELATED"/>
    <property type="match status" value="1"/>
</dbReference>
<dbReference type="Pfam" id="PF01596">
    <property type="entry name" value="Methyltransf_3"/>
    <property type="match status" value="1"/>
</dbReference>
<dbReference type="SUPFAM" id="SSF53335">
    <property type="entry name" value="S-adenosyl-L-methionine-dependent methyltransferases"/>
    <property type="match status" value="1"/>
</dbReference>
<dbReference type="PROSITE" id="PS51682">
    <property type="entry name" value="SAM_OMT_I"/>
    <property type="match status" value="1"/>
</dbReference>
<evidence type="ECO:0000255" key="1">
    <source>
        <dbReference type="PROSITE-ProRule" id="PRU01019"/>
    </source>
</evidence>
<evidence type="ECO:0000269" key="2">
    <source>
    </source>
</evidence>
<evidence type="ECO:0000305" key="3"/>
<evidence type="ECO:0000312" key="4">
    <source>
        <dbReference type="EMBL" id="CCP44468.1"/>
    </source>
</evidence>
<evidence type="ECO:0007744" key="5">
    <source>
    </source>
</evidence>
<sequence>MAAGIRNITTTGQIGDGREAAAVDYVLAHAGAGNIDDVLATIDKFAYEKSMLINVGDEKGTLLDAAVRRADPALALELGTYLGYGALRIARAAPEARVYSVELAEANASNARRIWAHAGVDDRVVCVVGTIGDGGRTLDALTEHGFATGTLDFVFLDHDKKAYLPDLQSILDRGWLHPGSIVVADNVRVPGAPKYRAYMRRQQGMSWNTIEHKTHLEYQTLVPDLVLESEYLG</sequence>
<comment type="function">
    <text evidence="3">Specifically methylates an O atom of its substrate.</text>
</comment>
<comment type="similarity">
    <text evidence="1">Belongs to the class I-like SAM-binding methyltransferase superfamily. Cation-dependent O-methyltransferase family.</text>
</comment>
<comment type="sequence caution" evidence="2">
    <conflict type="erroneous initiation">
        <sequence resource="EMBL-CDS" id="CCP44468"/>
    </conflict>
    <text>Truncated N-terminus.</text>
</comment>
<accession>L0TAD5</accession>
<protein>
    <recommendedName>
        <fullName evidence="3">Probable O-methyltransferase Rv1703c</fullName>
        <ecNumber evidence="1">2.1.1.-</ecNumber>
    </recommendedName>
</protein>
<proteinExistence type="evidence at protein level"/>
<reference key="1">
    <citation type="journal article" date="1998" name="Nature">
        <title>Deciphering the biology of Mycobacterium tuberculosis from the complete genome sequence.</title>
        <authorList>
            <person name="Cole S.T."/>
            <person name="Brosch R."/>
            <person name="Parkhill J."/>
            <person name="Garnier T."/>
            <person name="Churcher C.M."/>
            <person name="Harris D.E."/>
            <person name="Gordon S.V."/>
            <person name="Eiglmeier K."/>
            <person name="Gas S."/>
            <person name="Barry C.E. III"/>
            <person name="Tekaia F."/>
            <person name="Badcock K."/>
            <person name="Basham D."/>
            <person name="Brown D."/>
            <person name="Chillingworth T."/>
            <person name="Connor R."/>
            <person name="Davies R.M."/>
            <person name="Devlin K."/>
            <person name="Feltwell T."/>
            <person name="Gentles S."/>
            <person name="Hamlin N."/>
            <person name="Holroyd S."/>
            <person name="Hornsby T."/>
            <person name="Jagels K."/>
            <person name="Krogh A."/>
            <person name="McLean J."/>
            <person name="Moule S."/>
            <person name="Murphy L.D."/>
            <person name="Oliver S."/>
            <person name="Osborne J."/>
            <person name="Quail M.A."/>
            <person name="Rajandream M.A."/>
            <person name="Rogers J."/>
            <person name="Rutter S."/>
            <person name="Seeger K."/>
            <person name="Skelton S."/>
            <person name="Squares S."/>
            <person name="Squares R."/>
            <person name="Sulston J.E."/>
            <person name="Taylor K."/>
            <person name="Whitehead S."/>
            <person name="Barrell B.G."/>
        </authorList>
    </citation>
    <scope>NUCLEOTIDE SEQUENCE [LARGE SCALE GENOMIC DNA]</scope>
    <source>
        <strain>ATCC 25618 / H37Rv</strain>
    </source>
</reference>
<reference evidence="5" key="2">
    <citation type="journal article" date="2011" name="Mol. Cell. Proteomics">
        <title>Proteogenomic analysis of Mycobacterium tuberculosis by high resolution mass spectrometry.</title>
        <authorList>
            <person name="Kelkar D.S."/>
            <person name="Kumar D."/>
            <person name="Kumar P."/>
            <person name="Balakrishnan L."/>
            <person name="Muthusamy B."/>
            <person name="Yadav A.K."/>
            <person name="Shrivastava P."/>
            <person name="Marimuthu A."/>
            <person name="Anand S."/>
            <person name="Sundaram H."/>
            <person name="Kingsbury R."/>
            <person name="Harsha H.C."/>
            <person name="Nair B."/>
            <person name="Prasad T.S."/>
            <person name="Chauhan D.S."/>
            <person name="Katoch K."/>
            <person name="Katoch V.M."/>
            <person name="Kumar P."/>
            <person name="Chaerkady R."/>
            <person name="Ramachandran S."/>
            <person name="Dash D."/>
            <person name="Pandey A."/>
        </authorList>
    </citation>
    <scope>IDENTIFICATION BY MASS SPECTROMETRY [LARGE SCALE ANALYSIS]</scope>
    <source>
        <strain>ATCC 25618 / H37Rv</strain>
    </source>
</reference>
<reference key="3">
    <citation type="journal article" date="2022" name="Genomics">
        <title>Deep N-terminomics of Mycobacterium tuberculosis H37Rv extensively correct annotated encoding genes.</title>
        <authorList>
            <person name="Shi J."/>
            <person name="Meng S."/>
            <person name="Wan L."/>
            <person name="Zhang Z."/>
            <person name="Jiang S."/>
            <person name="Zhu H."/>
            <person name="Dai E."/>
            <person name="Chang L."/>
            <person name="Gao H."/>
            <person name="Wan K."/>
            <person name="Zhang L."/>
            <person name="Zhao X."/>
            <person name="Liu H."/>
            <person name="Lyu Z."/>
            <person name="Zhang Y."/>
            <person name="Xu P."/>
        </authorList>
    </citation>
    <scope>PROTEIN SEQUENCE OF 7-49</scope>
    <scope>SEQUENCE REVISION TO N-TERMINUS</scope>
    <source>
        <strain>H37Rv</strain>
    </source>
</reference>
<name>Y1703_MYCTU</name>
<organism>
    <name type="scientific">Mycobacterium tuberculosis (strain ATCC 25618 / H37Rv)</name>
    <dbReference type="NCBI Taxonomy" id="83332"/>
    <lineage>
        <taxon>Bacteria</taxon>
        <taxon>Bacillati</taxon>
        <taxon>Actinomycetota</taxon>
        <taxon>Actinomycetes</taxon>
        <taxon>Mycobacteriales</taxon>
        <taxon>Mycobacteriaceae</taxon>
        <taxon>Mycobacterium</taxon>
        <taxon>Mycobacterium tuberculosis complex</taxon>
    </lineage>
</organism>
<feature type="chain" id="PRO_0000455998" description="Probable O-methyltransferase Rv1703c">
    <location>
        <begin position="1"/>
        <end position="233"/>
    </location>
</feature>
<feature type="binding site" evidence="1">
    <location>
        <position position="55"/>
    </location>
    <ligand>
        <name>S-adenosyl-L-methionine</name>
        <dbReference type="ChEBI" id="CHEBI:59789"/>
    </ligand>
</feature>
<feature type="binding site" evidence="1">
    <location>
        <position position="77"/>
    </location>
    <ligand>
        <name>S-adenosyl-L-methionine</name>
        <dbReference type="ChEBI" id="CHEBI:59789"/>
    </ligand>
</feature>
<feature type="binding site" evidence="1">
    <location>
        <begin position="79"/>
        <end position="80"/>
    </location>
    <ligand>
        <name>S-adenosyl-L-methionine</name>
        <dbReference type="ChEBI" id="CHEBI:59789"/>
    </ligand>
</feature>
<feature type="binding site" evidence="1">
    <location>
        <position position="102"/>
    </location>
    <ligand>
        <name>S-adenosyl-L-methionine</name>
        <dbReference type="ChEBI" id="CHEBI:59789"/>
    </ligand>
</feature>
<feature type="binding site" evidence="1">
    <location>
        <position position="157"/>
    </location>
    <ligand>
        <name>a divalent metal cation</name>
        <dbReference type="ChEBI" id="CHEBI:60240"/>
    </ligand>
</feature>
<feature type="binding site" evidence="1">
    <location>
        <position position="159"/>
    </location>
    <ligand>
        <name>S-adenosyl-L-methionine</name>
        <dbReference type="ChEBI" id="CHEBI:59789"/>
    </ligand>
</feature>
<feature type="binding site" evidence="1">
    <location>
        <position position="185"/>
    </location>
    <ligand>
        <name>a divalent metal cation</name>
        <dbReference type="ChEBI" id="CHEBI:60240"/>
    </ligand>
</feature>
<feature type="binding site" evidence="1">
    <location>
        <position position="186"/>
    </location>
    <ligand>
        <name>a divalent metal cation</name>
        <dbReference type="ChEBI" id="CHEBI:60240"/>
    </ligand>
</feature>
<keyword id="KW-0903">Direct protein sequencing</keyword>
<keyword id="KW-0479">Metal-binding</keyword>
<keyword id="KW-0489">Methyltransferase</keyword>
<keyword id="KW-1185">Reference proteome</keyword>
<keyword id="KW-0949">S-adenosyl-L-methionine</keyword>
<keyword id="KW-0808">Transferase</keyword>